<sequence length="683" mass="75903">MGGLQNVRSAALIGHNGSGKSLLLAQILYKSGLIDKADTKYVDYDPVEEEKGASFSSHVASLEWKGKKVYLIDTPGFSDFISEVINGIFVSENIISVVNAVAGVEIQTERTWNMADEMKKPIIVFVNQMDKERANFENVVAELKERFSRKIVPVVVPIGAAENFEGVVDLLKKKAYRYDGDKVQEEDMPESFNDMRSEILEDIVEQDEELMMRYLDGEDIGYDELMRVLKEGYKKGEIVPVLSGSALKGIGLDLLLDYLGDIGVSPEEAPSYKALLEDGTEIEVKFSEEEPFCAYIFKSVVDQFVGRITFAKVIAGVLRPGDTVVNVQKDVTEKVGHVYVPILKQQKEVESAGPGEIVVLLKLKEGAVGETLAHRDRRVKIVPPAFPEPMFSRSVHPKSKSDIDKISSGLSRLSDSDPTFVWEYDPETGETVVSGLGAMHLDVMIERLKKIFGVDVEVGKPKIAYRETITTTAVAEHKHKKQTGGHGQYGHVKIQLEPLPRGQGYEFVDKIVGGVIPRNFIPSVDKGIREAMKKGVLAGYPVTDVRVILFDGSYHEVDSSDISFQIAAIQAFKKGMEAAKPVILEPIMEVEVFVPEENAGDVMGEISSRRGRPLGMEPSGKGMVKVKAEVPLAEMLDFSSKLSSITSGRGYFTMRFQRYEIVPPNIQEKIIEERRREMQEQEK</sequence>
<keyword id="KW-0342">GTP-binding</keyword>
<keyword id="KW-0547">Nucleotide-binding</keyword>
<keyword id="KW-1185">Reference proteome</keyword>
<feature type="chain" id="PRO_0000091278" description="Elongation factor G-like protein">
    <location>
        <begin position="1"/>
        <end position="683"/>
    </location>
</feature>
<feature type="domain" description="tr-type G" evidence="2">
    <location>
        <begin position="5"/>
        <end position="267"/>
    </location>
</feature>
<feature type="binding site" evidence="1">
    <location>
        <begin position="14"/>
        <end position="21"/>
    </location>
    <ligand>
        <name>GTP</name>
        <dbReference type="ChEBI" id="CHEBI:37565"/>
    </ligand>
</feature>
<feature type="binding site" evidence="1">
    <location>
        <begin position="73"/>
        <end position="77"/>
    </location>
    <ligand>
        <name>GTP</name>
        <dbReference type="ChEBI" id="CHEBI:37565"/>
    </ligand>
</feature>
<feature type="binding site" evidence="1">
    <location>
        <begin position="127"/>
        <end position="130"/>
    </location>
    <ligand>
        <name>GTP</name>
        <dbReference type="ChEBI" id="CHEBI:37565"/>
    </ligand>
</feature>
<evidence type="ECO:0000250" key="1"/>
<evidence type="ECO:0000255" key="2">
    <source>
        <dbReference type="PROSITE-ProRule" id="PRU01059"/>
    </source>
</evidence>
<comment type="similarity">
    <text evidence="2">Belongs to the TRAFAC class translation factor GTPase superfamily. Classic translation factor GTPase family. EF-G/EF-2 subfamily.</text>
</comment>
<name>EFGL_THEMA</name>
<dbReference type="EMBL" id="AE000512">
    <property type="protein sequence ID" value="AAD36718.1"/>
    <property type="molecule type" value="Genomic_DNA"/>
</dbReference>
<dbReference type="PIR" id="H72227">
    <property type="entry name" value="H72227"/>
</dbReference>
<dbReference type="RefSeq" id="NP_229451.1">
    <property type="nucleotide sequence ID" value="NC_000853.1"/>
</dbReference>
<dbReference type="SMR" id="Q9X1Y4"/>
<dbReference type="STRING" id="243274.TM_1651"/>
<dbReference type="PaxDb" id="243274-THEMA_05990"/>
<dbReference type="EnsemblBacteria" id="AAD36718">
    <property type="protein sequence ID" value="AAD36718"/>
    <property type="gene ID" value="TM_1651"/>
</dbReference>
<dbReference type="KEGG" id="tma:TM1651"/>
<dbReference type="KEGG" id="tmi:THEMA_05990"/>
<dbReference type="KEGG" id="tmm:Tmari_1660"/>
<dbReference type="KEGG" id="tmw:THMA_1692"/>
<dbReference type="eggNOG" id="COG0480">
    <property type="taxonomic scope" value="Bacteria"/>
</dbReference>
<dbReference type="InParanoid" id="Q9X1Y4"/>
<dbReference type="OrthoDB" id="9804431at2"/>
<dbReference type="Proteomes" id="UP000008183">
    <property type="component" value="Chromosome"/>
</dbReference>
<dbReference type="GO" id="GO:0005525">
    <property type="term" value="F:GTP binding"/>
    <property type="evidence" value="ECO:0007669"/>
    <property type="project" value="UniProtKB-KW"/>
</dbReference>
<dbReference type="GO" id="GO:0003924">
    <property type="term" value="F:GTPase activity"/>
    <property type="evidence" value="ECO:0007669"/>
    <property type="project" value="InterPro"/>
</dbReference>
<dbReference type="GO" id="GO:0003746">
    <property type="term" value="F:translation elongation factor activity"/>
    <property type="evidence" value="ECO:0007669"/>
    <property type="project" value="InterPro"/>
</dbReference>
<dbReference type="GO" id="GO:0032790">
    <property type="term" value="P:ribosome disassembly"/>
    <property type="evidence" value="ECO:0000318"/>
    <property type="project" value="GO_Central"/>
</dbReference>
<dbReference type="CDD" id="cd04170">
    <property type="entry name" value="EF-G_bact"/>
    <property type="match status" value="1"/>
</dbReference>
<dbReference type="CDD" id="cd16262">
    <property type="entry name" value="EFG_III"/>
    <property type="match status" value="1"/>
</dbReference>
<dbReference type="CDD" id="cd01434">
    <property type="entry name" value="EFG_mtEFG1_IV"/>
    <property type="match status" value="1"/>
</dbReference>
<dbReference type="CDD" id="cd03713">
    <property type="entry name" value="EFG_mtEFG_C"/>
    <property type="match status" value="1"/>
</dbReference>
<dbReference type="FunFam" id="3.30.230.10:FF:000003">
    <property type="entry name" value="Elongation factor G"/>
    <property type="match status" value="1"/>
</dbReference>
<dbReference type="FunFam" id="3.30.70.240:FF:000001">
    <property type="entry name" value="Elongation factor G"/>
    <property type="match status" value="1"/>
</dbReference>
<dbReference type="FunFam" id="3.30.70.870:FF:000002">
    <property type="entry name" value="Translation elongation factor 2"/>
    <property type="match status" value="1"/>
</dbReference>
<dbReference type="Gene3D" id="3.30.230.10">
    <property type="match status" value="1"/>
</dbReference>
<dbReference type="Gene3D" id="3.30.70.240">
    <property type="match status" value="1"/>
</dbReference>
<dbReference type="Gene3D" id="3.30.70.870">
    <property type="entry name" value="Elongation Factor G (Translational Gtpase), domain 3"/>
    <property type="match status" value="1"/>
</dbReference>
<dbReference type="Gene3D" id="3.40.50.300">
    <property type="entry name" value="P-loop containing nucleotide triphosphate hydrolases"/>
    <property type="match status" value="1"/>
</dbReference>
<dbReference type="Gene3D" id="2.40.30.10">
    <property type="entry name" value="Translation factors"/>
    <property type="match status" value="1"/>
</dbReference>
<dbReference type="InterPro" id="IPR053905">
    <property type="entry name" value="EF-G-like_DII"/>
</dbReference>
<dbReference type="InterPro" id="IPR041095">
    <property type="entry name" value="EFG_II"/>
</dbReference>
<dbReference type="InterPro" id="IPR009022">
    <property type="entry name" value="EFG_III"/>
</dbReference>
<dbReference type="InterPro" id="IPR035647">
    <property type="entry name" value="EFG_III/V"/>
</dbReference>
<dbReference type="InterPro" id="IPR047872">
    <property type="entry name" value="EFG_IV"/>
</dbReference>
<dbReference type="InterPro" id="IPR035649">
    <property type="entry name" value="EFG_V"/>
</dbReference>
<dbReference type="InterPro" id="IPR000640">
    <property type="entry name" value="EFG_V-like"/>
</dbReference>
<dbReference type="InterPro" id="IPR027417">
    <property type="entry name" value="P-loop_NTPase"/>
</dbReference>
<dbReference type="InterPro" id="IPR020568">
    <property type="entry name" value="Ribosomal_Su5_D2-typ_SF"/>
</dbReference>
<dbReference type="InterPro" id="IPR014721">
    <property type="entry name" value="Ribsml_uS5_D2-typ_fold_subgr"/>
</dbReference>
<dbReference type="InterPro" id="IPR005225">
    <property type="entry name" value="Small_GTP-bd"/>
</dbReference>
<dbReference type="InterPro" id="IPR000795">
    <property type="entry name" value="T_Tr_GTP-bd_dom"/>
</dbReference>
<dbReference type="InterPro" id="IPR009000">
    <property type="entry name" value="Transl_B-barrel_sf"/>
</dbReference>
<dbReference type="InterPro" id="IPR004540">
    <property type="entry name" value="Transl_elong_EFG/EF2"/>
</dbReference>
<dbReference type="InterPro" id="IPR005517">
    <property type="entry name" value="Transl_elong_EFG/EF2_IV"/>
</dbReference>
<dbReference type="NCBIfam" id="TIGR00484">
    <property type="entry name" value="EF-G"/>
    <property type="match status" value="1"/>
</dbReference>
<dbReference type="NCBIfam" id="NF009379">
    <property type="entry name" value="PRK12740.1-3"/>
    <property type="match status" value="1"/>
</dbReference>
<dbReference type="NCBIfam" id="NF009381">
    <property type="entry name" value="PRK12740.1-5"/>
    <property type="match status" value="1"/>
</dbReference>
<dbReference type="NCBIfam" id="NF009891">
    <property type="entry name" value="PRK13351.1-1"/>
    <property type="match status" value="1"/>
</dbReference>
<dbReference type="NCBIfam" id="TIGR00231">
    <property type="entry name" value="small_GTP"/>
    <property type="match status" value="1"/>
</dbReference>
<dbReference type="PANTHER" id="PTHR43261:SF6">
    <property type="entry name" value="ELONGATION FACTOR G-LIKE PROTEIN"/>
    <property type="match status" value="1"/>
</dbReference>
<dbReference type="PANTHER" id="PTHR43261">
    <property type="entry name" value="TRANSLATION ELONGATION FACTOR G-RELATED"/>
    <property type="match status" value="1"/>
</dbReference>
<dbReference type="Pfam" id="PF22042">
    <property type="entry name" value="EF-G_D2"/>
    <property type="match status" value="1"/>
</dbReference>
<dbReference type="Pfam" id="PF00679">
    <property type="entry name" value="EFG_C"/>
    <property type="match status" value="1"/>
</dbReference>
<dbReference type="Pfam" id="PF14492">
    <property type="entry name" value="EFG_III"/>
    <property type="match status" value="1"/>
</dbReference>
<dbReference type="Pfam" id="PF03764">
    <property type="entry name" value="EFG_IV"/>
    <property type="match status" value="1"/>
</dbReference>
<dbReference type="Pfam" id="PF00009">
    <property type="entry name" value="GTP_EFTU"/>
    <property type="match status" value="1"/>
</dbReference>
<dbReference type="SMART" id="SM00838">
    <property type="entry name" value="EFG_C"/>
    <property type="match status" value="1"/>
</dbReference>
<dbReference type="SMART" id="SM00889">
    <property type="entry name" value="EFG_IV"/>
    <property type="match status" value="1"/>
</dbReference>
<dbReference type="SUPFAM" id="SSF54980">
    <property type="entry name" value="EF-G C-terminal domain-like"/>
    <property type="match status" value="2"/>
</dbReference>
<dbReference type="SUPFAM" id="SSF52540">
    <property type="entry name" value="P-loop containing nucleoside triphosphate hydrolases"/>
    <property type="match status" value="1"/>
</dbReference>
<dbReference type="SUPFAM" id="SSF54211">
    <property type="entry name" value="Ribosomal protein S5 domain 2-like"/>
    <property type="match status" value="1"/>
</dbReference>
<dbReference type="SUPFAM" id="SSF50447">
    <property type="entry name" value="Translation proteins"/>
    <property type="match status" value="1"/>
</dbReference>
<dbReference type="PROSITE" id="PS51722">
    <property type="entry name" value="G_TR_2"/>
    <property type="match status" value="1"/>
</dbReference>
<organism>
    <name type="scientific">Thermotoga maritima (strain ATCC 43589 / DSM 3109 / JCM 10099 / NBRC 100826 / MSB8)</name>
    <dbReference type="NCBI Taxonomy" id="243274"/>
    <lineage>
        <taxon>Bacteria</taxon>
        <taxon>Thermotogati</taxon>
        <taxon>Thermotogota</taxon>
        <taxon>Thermotogae</taxon>
        <taxon>Thermotogales</taxon>
        <taxon>Thermotogaceae</taxon>
        <taxon>Thermotoga</taxon>
    </lineage>
</organism>
<reference key="1">
    <citation type="journal article" date="1999" name="Nature">
        <title>Evidence for lateral gene transfer between Archaea and Bacteria from genome sequence of Thermotoga maritima.</title>
        <authorList>
            <person name="Nelson K.E."/>
            <person name="Clayton R.A."/>
            <person name="Gill S.R."/>
            <person name="Gwinn M.L."/>
            <person name="Dodson R.J."/>
            <person name="Haft D.H."/>
            <person name="Hickey E.K."/>
            <person name="Peterson J.D."/>
            <person name="Nelson W.C."/>
            <person name="Ketchum K.A."/>
            <person name="McDonald L.A."/>
            <person name="Utterback T.R."/>
            <person name="Malek J.A."/>
            <person name="Linher K.D."/>
            <person name="Garrett M.M."/>
            <person name="Stewart A.M."/>
            <person name="Cotton M.D."/>
            <person name="Pratt M.S."/>
            <person name="Phillips C.A."/>
            <person name="Richardson D.L."/>
            <person name="Heidelberg J.F."/>
            <person name="Sutton G.G."/>
            <person name="Fleischmann R.D."/>
            <person name="Eisen J.A."/>
            <person name="White O."/>
            <person name="Salzberg S.L."/>
            <person name="Smith H.O."/>
            <person name="Venter J.C."/>
            <person name="Fraser C.M."/>
        </authorList>
    </citation>
    <scope>NUCLEOTIDE SEQUENCE [LARGE SCALE GENOMIC DNA]</scope>
    <source>
        <strain>ATCC 43589 / DSM 3109 / JCM 10099 / NBRC 100826 / MSB8</strain>
    </source>
</reference>
<accession>Q9X1Y4</accession>
<proteinExistence type="inferred from homology"/>
<protein>
    <recommendedName>
        <fullName>Elongation factor G-like protein</fullName>
    </recommendedName>
</protein>
<gene>
    <name type="ordered locus">TM_1651</name>
</gene>